<keyword id="KW-1003">Cell membrane</keyword>
<keyword id="KW-1015">Disulfide bond</keyword>
<keyword id="KW-0325">Glycoprotein</keyword>
<keyword id="KW-0407">Ion channel</keyword>
<keyword id="KW-0406">Ion transport</keyword>
<keyword id="KW-0472">Membrane</keyword>
<keyword id="KW-0479">Metal-binding</keyword>
<keyword id="KW-0597">Phosphoprotein</keyword>
<keyword id="KW-0630">Potassium</keyword>
<keyword id="KW-0631">Potassium channel</keyword>
<keyword id="KW-0633">Potassium transport</keyword>
<keyword id="KW-1185">Reference proteome</keyword>
<keyword id="KW-0812">Transmembrane</keyword>
<keyword id="KW-1133">Transmembrane helix</keyword>
<keyword id="KW-0813">Transport</keyword>
<gene>
    <name evidence="13 16" type="primary">KCNK18</name>
    <name evidence="13" type="synonym">TRESK</name>
    <name type="synonym">TRIK</name>
</gene>
<feature type="chain" id="PRO_0000312500" description="Potassium channel subfamily K member 18">
    <location>
        <begin position="1"/>
        <end position="384"/>
    </location>
</feature>
<feature type="topological domain" description="Cytoplasmic" evidence="3">
    <location>
        <begin position="1"/>
        <end position="23"/>
    </location>
</feature>
<feature type="transmembrane region" description="Helical" evidence="3">
    <location>
        <begin position="24"/>
        <end position="44"/>
    </location>
</feature>
<feature type="intramembrane region" description="Pore-forming; Name=Pore-forming 1" evidence="3">
    <location>
        <begin position="103"/>
        <end position="129"/>
    </location>
</feature>
<feature type="transmembrane region" description="Helical" evidence="3">
    <location>
        <begin position="130"/>
        <end position="148"/>
    </location>
</feature>
<feature type="topological domain" description="Cytoplasmic" evidence="3">
    <location>
        <begin position="149"/>
        <end position="280"/>
    </location>
</feature>
<feature type="transmembrane region" description="Helical" evidence="3">
    <location>
        <begin position="281"/>
        <end position="301"/>
    </location>
</feature>
<feature type="intramembrane region" description="Pore-forming; Name=Pore-forming 2" evidence="3">
    <location>
        <begin position="314"/>
        <end position="328"/>
    </location>
</feature>
<feature type="transmembrane region" description="Helical" evidence="3">
    <location>
        <begin position="335"/>
        <end position="355"/>
    </location>
</feature>
<feature type="topological domain" description="Cytoplasmic" evidence="3">
    <location>
        <begin position="356"/>
        <end position="384"/>
    </location>
</feature>
<feature type="region of interest" description="Selectivity filter 1" evidence="15">
    <location>
        <begin position="116"/>
        <end position="121"/>
    </location>
</feature>
<feature type="region of interest" description="Interaction with calcineurin" evidence="2">
    <location>
        <begin position="200"/>
        <end position="205"/>
    </location>
</feature>
<feature type="region of interest" description="Interaction with YWHAH" evidence="2">
    <location>
        <begin position="249"/>
        <end position="254"/>
    </location>
</feature>
<feature type="region of interest" description="Selectivity filter 2" evidence="15">
    <location>
        <begin position="323"/>
        <end position="328"/>
    </location>
</feature>
<feature type="binding site" evidence="1">
    <location>
        <position position="116"/>
    </location>
    <ligand>
        <name>K(+)</name>
        <dbReference type="ChEBI" id="CHEBI:29103"/>
        <label>1</label>
    </ligand>
</feature>
<feature type="binding site" evidence="1">
    <location>
        <position position="116"/>
    </location>
    <ligand>
        <name>K(+)</name>
        <dbReference type="ChEBI" id="CHEBI:29103"/>
        <label>4</label>
    </ligand>
</feature>
<feature type="binding site" evidence="1">
    <location>
        <position position="117"/>
    </location>
    <ligand>
        <name>K(+)</name>
        <dbReference type="ChEBI" id="CHEBI:29103"/>
        <label>1</label>
    </ligand>
</feature>
<feature type="binding site" evidence="1">
    <location>
        <position position="117"/>
    </location>
    <ligand>
        <name>K(+)</name>
        <dbReference type="ChEBI" id="CHEBI:29103"/>
        <label>2</label>
    </ligand>
</feature>
<feature type="binding site" evidence="1">
    <location>
        <position position="118"/>
    </location>
    <ligand>
        <name>K(+)</name>
        <dbReference type="ChEBI" id="CHEBI:29103"/>
        <label>2</label>
    </ligand>
</feature>
<feature type="binding site" evidence="1">
    <location>
        <position position="118"/>
    </location>
    <ligand>
        <name>K(+)</name>
        <dbReference type="ChEBI" id="CHEBI:29103"/>
        <label>3</label>
    </ligand>
</feature>
<feature type="binding site" evidence="1">
    <location>
        <position position="119"/>
    </location>
    <ligand>
        <name>K(+)</name>
        <dbReference type="ChEBI" id="CHEBI:29103"/>
        <label>3</label>
    </ligand>
</feature>
<feature type="site" description="Not glycosylated">
    <location>
        <position position="96"/>
    </location>
</feature>
<feature type="modified residue" description="Phosphoserine" evidence="2">
    <location>
        <position position="252"/>
    </location>
</feature>
<feature type="modified residue" description="Phosphoserine" evidence="2">
    <location>
        <position position="264"/>
    </location>
</feature>
<feature type="glycosylation site" description="N-linked (GlcNAc...) asparagine" evidence="7">
    <location>
        <position position="70"/>
    </location>
</feature>
<feature type="disulfide bond" description="Interchain (with C-66)" evidence="1">
    <location>
        <position position="66"/>
    </location>
</feature>
<feature type="sequence variant" id="VAR_089707" description="No effect on potassium channel activity; dbSNP:rs67346047." evidence="8 9">
    <original>R</original>
    <variation>G</variation>
    <location>
        <position position="10"/>
    </location>
</feature>
<feature type="sequence variant" id="VAR_064027" description="Loss of basal and inducible potassium channel activity; acts as dominant negative when it assembles with the wild-type subunit." evidence="8 9">
    <original>A</original>
    <variation>V</variation>
    <location>
        <position position="34"/>
    </location>
</feature>
<feature type="sequence variant" id="VAR_037521" description="In dbSNP:rs3909165.">
    <original>F</original>
    <variation>Y</variation>
    <location>
        <position position="58"/>
    </location>
</feature>
<feature type="sequence variant" id="VAR_089708" description="Loss of basal and inducible potassium channel activity; acts as dominant negative when it assembles with the wild-type subunit; loss of interaction with KCNK2; no effect on KCNK2 and KCNK10 currents; found in patients with relapsing-remitting multiple sclerosis (RRMS); results in increased MS relapse rates associated with decreased KCNK18 expression in Tregs; dbSNP:rs140325655." evidence="8 9 11 12">
    <original>C</original>
    <variation>R</variation>
    <location>
        <position position="110"/>
    </location>
</feature>
<feature type="sequence variant" id="VAR_037522" description="In dbSNP:rs363359.">
    <original>A</original>
    <variation>G</variation>
    <location>
        <position position="198"/>
    </location>
</feature>
<feature type="sequence variant" id="VAR_037523" description="No effect on potassium channel activity; dbSNP:rs363315." evidence="8 9">
    <original>S</original>
    <variation>P</variation>
    <location>
        <position position="231"/>
    </location>
</feature>
<feature type="sequence variant" id="VAR_037524" description="No effect on potassium channel activity; dbSNP:rs363360." evidence="8 9">
    <original>A</original>
    <variation>V</variation>
    <location>
        <position position="233"/>
    </location>
</feature>
<feature type="sequence variant" id="VAR_037525" description="In dbSNP:rs3026042.">
    <original>E</original>
    <variation>K</variation>
    <location>
        <position position="255"/>
    </location>
</feature>
<feature type="sequence variant" id="VAR_037526" description="In dbSNP:rs12247136.">
    <original>V</original>
    <variation>I</variation>
    <location>
        <position position="346"/>
    </location>
</feature>
<feature type="mutagenesis site" description="Strongly reduced current amplitude and localization to cell membrane. Strongly reduced current amplitude and localization to cell membrane; when associated with Q-96." evidence="7">
    <original>N</original>
    <variation>Q</variation>
    <location>
        <position position="70"/>
    </location>
</feature>
<feature type="mutagenesis site" description="Strongly reduced current amplitude and localization to cell membrane. Strongly reduced current amplitude and localization to cell membrane; when associated with Q-70." evidence="7">
    <original>N</original>
    <variation>Q</variation>
    <location>
        <position position="96"/>
    </location>
</feature>
<feature type="mutagenesis site" description="Restores sensitivity to extracellular protons." evidence="6">
    <original>Y</original>
    <variation>H</variation>
    <location>
        <position position="121"/>
    </location>
</feature>
<reference key="1">
    <citation type="journal article" date="2003" name="J. Biol. Chem.">
        <title>A novel two-pore domain K+ channel, TRESK, is localized in the spinal cord.</title>
        <authorList>
            <person name="Sano Y."/>
            <person name="Inamura K."/>
            <person name="Miyake A."/>
            <person name="Mochizuki S."/>
            <person name="Kitada C."/>
            <person name="Yokoi H."/>
            <person name="Nozawa K."/>
            <person name="Okada H."/>
            <person name="Matsushime H."/>
            <person name="Furuichi K."/>
        </authorList>
    </citation>
    <scope>NUCLEOTIDE SEQUENCE [MRNA]</scope>
    <scope>FUNCTION</scope>
    <scope>TRANSPORTER ACTIVITY</scope>
    <scope>ACTIVITY REGULATION</scope>
    <scope>TISSUE SPECIFICITY</scope>
    <source>
        <tissue>Spinal cord</tissue>
    </source>
</reference>
<reference key="2">
    <citation type="journal article" date="2004" name="Nature">
        <title>The DNA sequence and comparative analysis of human chromosome 10.</title>
        <authorList>
            <person name="Deloukas P."/>
            <person name="Earthrowl M.E."/>
            <person name="Grafham D.V."/>
            <person name="Rubenfield M."/>
            <person name="French L."/>
            <person name="Steward C.A."/>
            <person name="Sims S.K."/>
            <person name="Jones M.C."/>
            <person name="Searle S."/>
            <person name="Scott C."/>
            <person name="Howe K."/>
            <person name="Hunt S.E."/>
            <person name="Andrews T.D."/>
            <person name="Gilbert J.G.R."/>
            <person name="Swarbreck D."/>
            <person name="Ashurst J.L."/>
            <person name="Taylor A."/>
            <person name="Battles J."/>
            <person name="Bird C.P."/>
            <person name="Ainscough R."/>
            <person name="Almeida J.P."/>
            <person name="Ashwell R.I.S."/>
            <person name="Ambrose K.D."/>
            <person name="Babbage A.K."/>
            <person name="Bagguley C.L."/>
            <person name="Bailey J."/>
            <person name="Banerjee R."/>
            <person name="Bates K."/>
            <person name="Beasley H."/>
            <person name="Bray-Allen S."/>
            <person name="Brown A.J."/>
            <person name="Brown J.Y."/>
            <person name="Burford D.C."/>
            <person name="Burrill W."/>
            <person name="Burton J."/>
            <person name="Cahill P."/>
            <person name="Camire D."/>
            <person name="Carter N.P."/>
            <person name="Chapman J.C."/>
            <person name="Clark S.Y."/>
            <person name="Clarke G."/>
            <person name="Clee C.M."/>
            <person name="Clegg S."/>
            <person name="Corby N."/>
            <person name="Coulson A."/>
            <person name="Dhami P."/>
            <person name="Dutta I."/>
            <person name="Dunn M."/>
            <person name="Faulkner L."/>
            <person name="Frankish A."/>
            <person name="Frankland J.A."/>
            <person name="Garner P."/>
            <person name="Garnett J."/>
            <person name="Gribble S."/>
            <person name="Griffiths C."/>
            <person name="Grocock R."/>
            <person name="Gustafson E."/>
            <person name="Hammond S."/>
            <person name="Harley J.L."/>
            <person name="Hart E."/>
            <person name="Heath P.D."/>
            <person name="Ho T.P."/>
            <person name="Hopkins B."/>
            <person name="Horne J."/>
            <person name="Howden P.J."/>
            <person name="Huckle E."/>
            <person name="Hynds C."/>
            <person name="Johnson C."/>
            <person name="Johnson D."/>
            <person name="Kana A."/>
            <person name="Kay M."/>
            <person name="Kimberley A.M."/>
            <person name="Kershaw J.K."/>
            <person name="Kokkinaki M."/>
            <person name="Laird G.K."/>
            <person name="Lawlor S."/>
            <person name="Lee H.M."/>
            <person name="Leongamornlert D.A."/>
            <person name="Laird G."/>
            <person name="Lloyd C."/>
            <person name="Lloyd D.M."/>
            <person name="Loveland J."/>
            <person name="Lovell J."/>
            <person name="McLaren S."/>
            <person name="McLay K.E."/>
            <person name="McMurray A."/>
            <person name="Mashreghi-Mohammadi M."/>
            <person name="Matthews L."/>
            <person name="Milne S."/>
            <person name="Nickerson T."/>
            <person name="Nguyen M."/>
            <person name="Overton-Larty E."/>
            <person name="Palmer S.A."/>
            <person name="Pearce A.V."/>
            <person name="Peck A.I."/>
            <person name="Pelan S."/>
            <person name="Phillimore B."/>
            <person name="Porter K."/>
            <person name="Rice C.M."/>
            <person name="Rogosin A."/>
            <person name="Ross M.T."/>
            <person name="Sarafidou T."/>
            <person name="Sehra H.K."/>
            <person name="Shownkeen R."/>
            <person name="Skuce C.D."/>
            <person name="Smith M."/>
            <person name="Standring L."/>
            <person name="Sycamore N."/>
            <person name="Tester J."/>
            <person name="Thorpe A."/>
            <person name="Torcasso W."/>
            <person name="Tracey A."/>
            <person name="Tromans A."/>
            <person name="Tsolas J."/>
            <person name="Wall M."/>
            <person name="Walsh J."/>
            <person name="Wang H."/>
            <person name="Weinstock K."/>
            <person name="West A.P."/>
            <person name="Willey D.L."/>
            <person name="Whitehead S.L."/>
            <person name="Wilming L."/>
            <person name="Wray P.W."/>
            <person name="Young L."/>
            <person name="Chen Y."/>
            <person name="Lovering R.C."/>
            <person name="Moschonas N.K."/>
            <person name="Siebert R."/>
            <person name="Fechtel K."/>
            <person name="Bentley D."/>
            <person name="Durbin R.M."/>
            <person name="Hubbard T."/>
            <person name="Doucette-Stamm L."/>
            <person name="Beck S."/>
            <person name="Smith D.R."/>
            <person name="Rogers J."/>
        </authorList>
    </citation>
    <scope>NUCLEOTIDE SEQUENCE [LARGE SCALE GENOMIC DNA]</scope>
</reference>
<reference key="3">
    <citation type="journal article" date="2004" name="Anesth. Analg.">
        <title>Potent activation of the human tandem pore domain K channel TRESK with clinical concentrations of volatile anesthetics.</title>
        <authorList>
            <person name="Liu C."/>
            <person name="Au J.D."/>
            <person name="Zou H.L."/>
            <person name="Cotten J.F."/>
            <person name="Yost C.S."/>
        </authorList>
    </citation>
    <scope>FUNCTION</scope>
    <scope>TRANSPORTER ACTIVITY</scope>
    <scope>ACTIVITY REGULATION</scope>
    <scope>TISSUE SPECIFICITY</scope>
</reference>
<reference key="4">
    <citation type="journal article" date="2007" name="J. Physiol. (Lond.)">
        <title>TRESK two-pore-domain K+ channels constitute a significant component of background potassium currents in murine dorsal root ganglion neurones.</title>
        <authorList>
            <person name="Dobler T."/>
            <person name="Springauf A."/>
            <person name="Tovornik S."/>
            <person name="Weber M."/>
            <person name="Schmitt A."/>
            <person name="Sedlmeier R."/>
            <person name="Wischmeyer E."/>
            <person name="Doring F."/>
        </authorList>
    </citation>
    <scope>MUTAGENESIS OF TYR-121</scope>
</reference>
<reference key="5">
    <citation type="journal article" date="2010" name="Biochem. Biophys. Res. Commun.">
        <title>N-linked glycosylation determines cell surface expression of two-pore-domain K+ channel TRESK.</title>
        <authorList>
            <person name="Egenberger B."/>
            <person name="Polleichtner G."/>
            <person name="Wischmeyer E."/>
            <person name="Doring F."/>
        </authorList>
    </citation>
    <scope>SUBCELLULAR LOCATION</scope>
    <scope>GLYCOSYLATION AT ASN-70</scope>
    <scope>MUTAGENESIS OF ASN-70 AND ASN-96</scope>
</reference>
<reference key="6">
    <citation type="journal article" date="2012" name="Sci. Rep.">
        <title>Functional analysis of missense variants in the TRESK (KCNK18) K channel.</title>
        <authorList>
            <person name="Andres-Enguix I."/>
            <person name="Shang L."/>
            <person name="Stansfeld P.J."/>
            <person name="Morahan J.M."/>
            <person name="Sansom M.S."/>
            <person name="Lafreniere R.G."/>
            <person name="Roy B."/>
            <person name="Griffiths L.R."/>
            <person name="Rouleau G.A."/>
            <person name="Ebers G.C."/>
            <person name="Cader Z.M."/>
            <person name="Tucker S.J."/>
        </authorList>
    </citation>
    <scope>FUNCTION</scope>
    <scope>TRANSPORTER ACTIVITY</scope>
    <scope>CHARACTERIZATION OF VARIANTS GLY-10; VAL-34; ARG-110; PRO-231 AND VAL-233</scope>
</reference>
<reference key="7">
    <citation type="journal article" date="2016" name="Cell">
        <title>A Non-canonical Voltage-Sensing Mechanism Controls Gating in K2P K(+) Channels.</title>
        <authorList>
            <person name="Schewe M."/>
            <person name="Nematian-Ardestani E."/>
            <person name="Sun H."/>
            <person name="Musinszki M."/>
            <person name="Cordeiro S."/>
            <person name="Bucci G."/>
            <person name="de Groot B.L."/>
            <person name="Tucker S.J."/>
            <person name="Rapedius M."/>
            <person name="Baukrowitz T."/>
        </authorList>
    </citation>
    <scope>FUNCTION</scope>
    <scope>TRANSPORTER ACTIVITY</scope>
    <scope>REACTION MECHANISM</scope>
    <scope>DOMAIN</scope>
</reference>
<reference key="8">
    <citation type="journal article" date="2019" name="Neuron">
        <title>Migraine-Associated TRESK Mutations Increase Neuronal Excitability through Alternative Translation Initiation and Inhibition of TREK.</title>
        <authorList>
            <person name="Royal P."/>
            <person name="Andres-Bilbe A."/>
            <person name="Avalos Prado P."/>
            <person name="Verkest C."/>
            <person name="Wdziekonski B."/>
            <person name="Schaub S."/>
            <person name="Baron A."/>
            <person name="Lesage F."/>
            <person name="Gasull X."/>
            <person name="Levitz J."/>
            <person name="Sandoz G."/>
        </authorList>
    </citation>
    <scope>FUNCTION</scope>
    <scope>TRANSPORTER ACTIVITY</scope>
    <scope>CHARACTERIZATION OF VARIANT ARG-110</scope>
</reference>
<reference key="9">
    <citation type="journal article" date="2022" name="Cell. Physiol. Biochem.">
        <title>The Special One: Architecture, Physiology and Pharmacology of the TRESK Channel.</title>
        <authorList>
            <person name="Schreiber J.A."/>
            <person name="Duefer M."/>
            <person name="Seebohm G."/>
        </authorList>
    </citation>
    <scope>REVIEW</scope>
    <scope>REGION</scope>
</reference>
<reference key="10">
    <citation type="journal article" date="2022" name="Cell Res.">
        <title>K2P18.1 translates T cell receptor signals into thymic regulatory T cell development.</title>
        <authorList>
            <person name="Ruck T."/>
            <person name="Bock S."/>
            <person name="Pfeuffer S."/>
            <person name="Schroeter C.B."/>
            <person name="Cengiz D."/>
            <person name="Marciniak P."/>
            <person name="Lindner M."/>
            <person name="Herrmann A."/>
            <person name="Liebmann M."/>
            <person name="Kovac S."/>
            <person name="Gola L."/>
            <person name="Rolfes L."/>
            <person name="Pawlitzki M."/>
            <person name="Opel N."/>
            <person name="Hahn T."/>
            <person name="Dannlowski U."/>
            <person name="Pap T."/>
            <person name="Luessi F."/>
            <person name="Schreiber J.A."/>
            <person name="Wuensch B."/>
            <person name="Kuhlmann T."/>
            <person name="Seebohm G."/>
            <person name="Tackenberg B."/>
            <person name="Seja P."/>
            <person name="Doering F."/>
            <person name="Wischmeyer E."/>
            <person name="Chasan A.I."/>
            <person name="Roth J."/>
            <person name="Klotz L."/>
            <person name="Meyer Zu Hoerste G."/>
            <person name="Wiendl H."/>
            <person name="Marschall T."/>
            <person name="Floess S."/>
            <person name="Huehn J."/>
            <person name="Budde T."/>
            <person name="Bopp T."/>
            <person name="Bittner S."/>
            <person name="Meuth S.G."/>
        </authorList>
    </citation>
    <scope>FUNCTION</scope>
    <scope>TISSUE SPECIFICITY</scope>
    <scope>VARIANT ARG-110</scope>
</reference>
<reference key="11">
    <citation type="journal article" date="2010" name="Nat. Med.">
        <title>A dominant-negative mutation in the TRESK potassium channel is linked to familial migraine with aura.</title>
        <authorList>
            <person name="Lafreniere R.G."/>
            <person name="Cader M.Z."/>
            <person name="Poulin J.F."/>
            <person name="Andres-Enguix I."/>
            <person name="Simoneau M."/>
            <person name="Gupta N."/>
            <person name="Boisvert K."/>
            <person name="Lafreniere F."/>
            <person name="McLaughlan S."/>
            <person name="Dube M.P."/>
            <person name="Marcinkiewicz M.M."/>
            <person name="Ramagopalan S."/>
            <person name="Ansorge O."/>
            <person name="Brais B."/>
            <person name="Sequeiros J."/>
            <person name="Pereira-Monteiro J.M."/>
            <person name="Griffiths L.R."/>
            <person name="Tucker S.J."/>
            <person name="Ebers G."/>
            <person name="Rouleau G.A."/>
        </authorList>
    </citation>
    <scope>INVOLVEMENT IN MGR13</scope>
    <scope>VARIANTS GLY-10; VAL-34; ARG-110; PRO-231 AND VAL-233</scope>
    <scope>FUNCTION</scope>
    <scope>TISSUE SPECIFICITY</scope>
</reference>
<proteinExistence type="evidence at protein level"/>
<sequence length="384" mass="43671">MEVSGHPQARRCCPEALGKLFPGLCFLCFLVTYALVGAVVFSAIEDGQVLVAADDGEFEKFLEELCRILNCSETVVEDRKQDLQGHLQKVKPQWFNRTTHWSFLSSLFFCCTVFSTVGYGYIYPVTRLGKYLCMLYALFGIPLMFLVLTDTGDILATILSTSYNRFRKFPFFTRPLLSKWCPKSLFKKKPDPKPADEAVPQIIISAEELPGPKLGTCPSRPSCSMELFERSHALEKQNTLQLPPQAMERSNSCPELVLGRLSYSIISNLDEVGQQVERLDIPLPIIALIVFAYISCAAAILPFWETQLDFENAFYFCFVTLTTIGFGDTVLEHPNFFLFFSIYIIVGMEIVFIAFKLVQNRLIDIYKNVMLFFAKGKFYHLVKK</sequence>
<comment type="function">
    <text evidence="2 4 5 8 9 10 11 12">K(+) channel that conducts outward and inward rectifying currents at depolarized and hyperpolarized membrane potentials, respectively. The outward rectifying currents are voltage-dependent, coupled to K(+) electrochemical gradient across the membrane, whereas the inward currents can be induced in response to activation of Ca(2+)-mobilizing receptors (PubMed:12754259, PubMed:15562060, PubMed:20871611, PubMed:22355750, PubMed:26919430, PubMed:30573346). Homo- and heterodimerizes to form functional channels with distinct regulatory and gating properties. In trigeminal ganglia sensory neurons, the heterodimers of KCNK18/TRESK and KCNK2/TREK-1 or KCNK10/TREK-2 inhibit neuronal firing and neurogenic inflammation by stabilizing the resting membrane potential at K(+) equilibrium potential as well as by regulating the threshold of action potentials and the spike frequency (By similarity). In thymocytes, conducts K(+) currents upon T cell receptor (TCR) signaling leading to sustained Ca(2+) influx and NF-kappa-B activation, FOXP3 transcription and positive selection of regulatory T cell (Treg) progenitor subsets (PubMed:34702947). Appears to mediate the analgesics effects of hydroxy-alpha-sanshool, a metabolite naturally present in Schezuan pepper and other Xanthoxylum plants (By similarity).</text>
</comment>
<comment type="catalytic activity">
    <reaction evidence="4 5 9 10 11">
        <text>K(+)(in) = K(+)(out)</text>
        <dbReference type="Rhea" id="RHEA:29463"/>
        <dbReference type="ChEBI" id="CHEBI:29103"/>
    </reaction>
</comment>
<comment type="activity regulation">
    <text evidence="4 5">Activated by volatile anesthetics but inhibited by amide local anesthetics. Inhibited by Ba(2+) ions. Inhibited by free polyunsaturated fatty acids. Channel conductance is sensitive to intracellular pH, it decreases at acidic pH and increases at basic pH. In contrast to its mouse ortholog, it is not regulated by extracellular protons. Insensitive to changes in temperature.</text>
</comment>
<comment type="subunit">
    <text evidence="2">Homodimer. Heterodimer with KCNK2. Heterodimer with KCNK10. Interacts with calcineurin. Interacts with YWHAH, in a phosphorylation-dependent manner.</text>
</comment>
<comment type="subcellular location">
    <subcellularLocation>
        <location evidence="7">Cell membrane</location>
        <topology evidence="7">Multi-pass membrane protein</topology>
    </subcellularLocation>
</comment>
<comment type="tissue specificity">
    <text evidence="4 5 8 12">Expressed in dorsal root ganglion and trigeminal ganglion neurons. Detected at low levels in spinal cord. Expressed in regulatory T cells (at protein level).</text>
</comment>
<comment type="domain">
    <text evidence="10">Each subunit contributes two pore-forming domains 1 and 2 which assemble to form a single pore with M2 and M4 transmembrane helices lining the central cavity and M1 and M3 facing the lipid bilayer. The transmembrane helices are bridged by the selectivity filters 1 and 2 carrying a signature sequence TxTTxGYGD that coordinate the permeant ions. Up to four ions can simultaneously occupy the selectivity filter and at least two elementary charges must translocate across the filter to convert it into the open conformation.</text>
</comment>
<comment type="PTM">
    <text evidence="7">N-glycosylated.</text>
</comment>
<comment type="PTM">
    <text evidence="2">Phosphorylation of Ser-264 is required for the binding of 14-3-3eta/YWHAH. Calcineurin-mediated dephosphorylation enhances channel activity.</text>
</comment>
<comment type="disease" evidence="8">
    <disease id="DI-02934">
        <name>Migraine with or without aura 13</name>
        <acronym>MGR13</acronym>
        <description>A form of migraine transmitted in an autosomal dominant pattern. Migraine is a disabling symptom complex of periodic headaches, usually temporal and unilateral. Headaches are often accompanied by irritability, nausea, vomiting and photophobia, preceded by constriction of the cranial arteries. The two major subtypes are common migraine (migraine without aura) and classic migraine (migraine with aura). Classic migraine is characterized by recurrent attacks of reversible neurological symptoms (aura) that precede or accompany the headache. Aura may include a combination of sensory disturbances, such as blurred vision, hallucinations, vertigo, numbness and difficulty in concentrating and speaking.</description>
        <dbReference type="MIM" id="613656"/>
    </disease>
    <text>The disease is caused by variants affecting the gene represented in this entry. Susceptibility to migraine has been shown to be conferred by a frameshift mutation that segregates with the disorder in a large multigenerational family. Migraine was associated with sensitivity to lights, sounds, and smells, as well as nausea and occasional vomiting. Triggers included fatigue, alcohol and bright lights. Mutations in KCNK18 are a rare cause of migraine.</text>
</comment>
<comment type="similarity">
    <text evidence="14">Belongs to the two pore domain potassium channel (TC 1.A.1.8) family.</text>
</comment>
<comment type="online information" name="Protein Spotlight">
    <link uri="https://www.proteinspotlight.org/back_issues/124"/>
    <text>Throb - Issue 124 of December 2010</text>
</comment>
<name>KCNKI_HUMAN</name>
<evidence type="ECO:0000250" key="1">
    <source>
        <dbReference type="UniProtKB" id="P57789"/>
    </source>
</evidence>
<evidence type="ECO:0000250" key="2">
    <source>
        <dbReference type="UniProtKB" id="Q6VV64"/>
    </source>
</evidence>
<evidence type="ECO:0000255" key="3"/>
<evidence type="ECO:0000269" key="4">
    <source>
    </source>
</evidence>
<evidence type="ECO:0000269" key="5">
    <source>
    </source>
</evidence>
<evidence type="ECO:0000269" key="6">
    <source>
    </source>
</evidence>
<evidence type="ECO:0000269" key="7">
    <source>
    </source>
</evidence>
<evidence type="ECO:0000269" key="8">
    <source>
    </source>
</evidence>
<evidence type="ECO:0000269" key="9">
    <source>
    </source>
</evidence>
<evidence type="ECO:0000269" key="10">
    <source>
    </source>
</evidence>
<evidence type="ECO:0000269" key="11">
    <source>
    </source>
</evidence>
<evidence type="ECO:0000269" key="12">
    <source>
    </source>
</evidence>
<evidence type="ECO:0000303" key="13">
    <source>
    </source>
</evidence>
<evidence type="ECO:0000305" key="14"/>
<evidence type="ECO:0000305" key="15">
    <source>
    </source>
</evidence>
<evidence type="ECO:0000312" key="16">
    <source>
        <dbReference type="HGNC" id="HGNC:19439"/>
    </source>
</evidence>
<dbReference type="EMBL" id="AB087138">
    <property type="protein sequence ID" value="BAC78527.1"/>
    <property type="molecule type" value="mRNA"/>
</dbReference>
<dbReference type="EMBL" id="AL731557">
    <property type="status" value="NOT_ANNOTATED_CDS"/>
    <property type="molecule type" value="Genomic_DNA"/>
</dbReference>
<dbReference type="CCDS" id="CCDS7598.1"/>
<dbReference type="RefSeq" id="NP_862823.1">
    <property type="nucleotide sequence ID" value="NM_181840.1"/>
</dbReference>
<dbReference type="SMR" id="Q7Z418"/>
<dbReference type="BioGRID" id="130759">
    <property type="interactions" value="28"/>
</dbReference>
<dbReference type="FunCoup" id="Q7Z418">
    <property type="interactions" value="92"/>
</dbReference>
<dbReference type="IntAct" id="Q7Z418">
    <property type="interactions" value="26"/>
</dbReference>
<dbReference type="STRING" id="9606.ENSP00000334650"/>
<dbReference type="BindingDB" id="Q7Z418"/>
<dbReference type="ChEMBL" id="CHEMBL2331042"/>
<dbReference type="DrugCentral" id="Q7Z418"/>
<dbReference type="GlyCosmos" id="Q7Z418">
    <property type="glycosylation" value="1 site, No reported glycans"/>
</dbReference>
<dbReference type="GlyGen" id="Q7Z418">
    <property type="glycosylation" value="1 site"/>
</dbReference>
<dbReference type="iPTMnet" id="Q7Z418"/>
<dbReference type="PhosphoSitePlus" id="Q7Z418"/>
<dbReference type="BioMuta" id="KCNK18"/>
<dbReference type="DMDM" id="74750072"/>
<dbReference type="MassIVE" id="Q7Z418"/>
<dbReference type="PaxDb" id="9606-ENSP00000334650"/>
<dbReference type="PeptideAtlas" id="Q7Z418"/>
<dbReference type="ProteomicsDB" id="69129"/>
<dbReference type="Antibodypedia" id="46272">
    <property type="antibodies" value="111 antibodies from 29 providers"/>
</dbReference>
<dbReference type="DNASU" id="338567"/>
<dbReference type="Ensembl" id="ENST00000334549.1">
    <property type="protein sequence ID" value="ENSP00000334650.1"/>
    <property type="gene ID" value="ENSG00000186795.1"/>
</dbReference>
<dbReference type="GeneID" id="338567"/>
<dbReference type="KEGG" id="hsa:338567"/>
<dbReference type="MANE-Select" id="ENST00000334549.1">
    <property type="protein sequence ID" value="ENSP00000334650.1"/>
    <property type="RefSeq nucleotide sequence ID" value="NM_181840.1"/>
    <property type="RefSeq protein sequence ID" value="NP_862823.1"/>
</dbReference>
<dbReference type="UCSC" id="uc010qsr.2">
    <property type="organism name" value="human"/>
</dbReference>
<dbReference type="AGR" id="HGNC:19439"/>
<dbReference type="CTD" id="338567"/>
<dbReference type="DisGeNET" id="338567"/>
<dbReference type="GeneCards" id="KCNK18"/>
<dbReference type="HGNC" id="HGNC:19439">
    <property type="gene designation" value="KCNK18"/>
</dbReference>
<dbReference type="HPA" id="ENSG00000186795">
    <property type="expression patterns" value="Not detected"/>
</dbReference>
<dbReference type="MalaCards" id="KCNK18"/>
<dbReference type="MIM" id="613655">
    <property type="type" value="gene"/>
</dbReference>
<dbReference type="MIM" id="613656">
    <property type="type" value="phenotype"/>
</dbReference>
<dbReference type="neXtProt" id="NX_Q7Z418"/>
<dbReference type="OpenTargets" id="ENSG00000186795"/>
<dbReference type="PharmGKB" id="PA134985465"/>
<dbReference type="VEuPathDB" id="HostDB:ENSG00000186795"/>
<dbReference type="eggNOG" id="KOG1418">
    <property type="taxonomic scope" value="Eukaryota"/>
</dbReference>
<dbReference type="GeneTree" id="ENSGT00700000104522"/>
<dbReference type="HOGENOM" id="CLU_022504_5_3_1"/>
<dbReference type="InParanoid" id="Q7Z418"/>
<dbReference type="OMA" id="FWAVFPH"/>
<dbReference type="OrthoDB" id="297496at2759"/>
<dbReference type="PAN-GO" id="Q7Z418">
    <property type="GO annotations" value="5 GO annotations based on evolutionary models"/>
</dbReference>
<dbReference type="PhylomeDB" id="Q7Z418"/>
<dbReference type="TreeFam" id="TF316115"/>
<dbReference type="PathwayCommons" id="Q7Z418"/>
<dbReference type="Reactome" id="R-HSA-1299344">
    <property type="pathway name" value="TWIK-related spinal cord K+ channel (TRESK)"/>
</dbReference>
<dbReference type="Reactome" id="R-HSA-5576886">
    <property type="pathway name" value="Phase 4 - resting membrane potential"/>
</dbReference>
<dbReference type="SignaLink" id="Q7Z418"/>
<dbReference type="SIGNOR" id="Q7Z418"/>
<dbReference type="BioGRID-ORCS" id="338567">
    <property type="hits" value="7 hits in 1137 CRISPR screens"/>
</dbReference>
<dbReference type="GeneWiki" id="KCNK18"/>
<dbReference type="GenomeRNAi" id="338567"/>
<dbReference type="Pharos" id="Q7Z418">
    <property type="development level" value="Tclin"/>
</dbReference>
<dbReference type="PRO" id="PR:Q7Z418"/>
<dbReference type="Proteomes" id="UP000005640">
    <property type="component" value="Chromosome 10"/>
</dbReference>
<dbReference type="RNAct" id="Q7Z418">
    <property type="molecule type" value="protein"/>
</dbReference>
<dbReference type="Bgee" id="ENSG00000186795">
    <property type="expression patterns" value="Expressed in nucleus accumbens and 5 other cell types or tissues"/>
</dbReference>
<dbReference type="GO" id="GO:0005886">
    <property type="term" value="C:plasma membrane"/>
    <property type="evidence" value="ECO:0000314"/>
    <property type="project" value="UniProtKB"/>
</dbReference>
<dbReference type="GO" id="GO:0015269">
    <property type="term" value="F:calcium-activated potassium channel activity"/>
    <property type="evidence" value="ECO:0007669"/>
    <property type="project" value="Ensembl"/>
</dbReference>
<dbReference type="GO" id="GO:0046872">
    <property type="term" value="F:metal ion binding"/>
    <property type="evidence" value="ECO:0007669"/>
    <property type="project" value="UniProtKB-KW"/>
</dbReference>
<dbReference type="GO" id="GO:0015271">
    <property type="term" value="F:outward rectifier potassium channel activity"/>
    <property type="evidence" value="ECO:0000314"/>
    <property type="project" value="UniProtKB"/>
</dbReference>
<dbReference type="GO" id="GO:0022841">
    <property type="term" value="F:potassium ion leak channel activity"/>
    <property type="evidence" value="ECO:0000318"/>
    <property type="project" value="GO_Central"/>
</dbReference>
<dbReference type="GO" id="GO:0071467">
    <property type="term" value="P:cellular response to pH"/>
    <property type="evidence" value="ECO:0000314"/>
    <property type="project" value="BHF-UCL"/>
</dbReference>
<dbReference type="GO" id="GO:0097623">
    <property type="term" value="P:potassium ion export across plasma membrane"/>
    <property type="evidence" value="ECO:0000314"/>
    <property type="project" value="BHF-UCL"/>
</dbReference>
<dbReference type="GO" id="GO:0071805">
    <property type="term" value="P:potassium ion transmembrane transport"/>
    <property type="evidence" value="ECO:0000318"/>
    <property type="project" value="GO_Central"/>
</dbReference>
<dbReference type="GO" id="GO:0006813">
    <property type="term" value="P:potassium ion transport"/>
    <property type="evidence" value="ECO:0000314"/>
    <property type="project" value="UniProtKB"/>
</dbReference>
<dbReference type="GO" id="GO:0032829">
    <property type="term" value="P:regulation of CD4-positive, CD25-positive, alpha-beta regulatory T cell differentiation"/>
    <property type="evidence" value="ECO:0000250"/>
    <property type="project" value="UniProtKB"/>
</dbReference>
<dbReference type="Gene3D" id="1.10.287.70">
    <property type="match status" value="1"/>
</dbReference>
<dbReference type="InterPro" id="IPR003280">
    <property type="entry name" value="2pore_dom_K_chnl"/>
</dbReference>
<dbReference type="InterPro" id="IPR013099">
    <property type="entry name" value="K_chnl_dom"/>
</dbReference>
<dbReference type="PANTHER" id="PTHR11003:SF346">
    <property type="entry name" value="POTASSIUM CHANNEL SUBFAMILY K MEMBER 18"/>
    <property type="match status" value="1"/>
</dbReference>
<dbReference type="PANTHER" id="PTHR11003">
    <property type="entry name" value="POTASSIUM CHANNEL, SUBFAMILY K"/>
    <property type="match status" value="1"/>
</dbReference>
<dbReference type="Pfam" id="PF07885">
    <property type="entry name" value="Ion_trans_2"/>
    <property type="match status" value="2"/>
</dbReference>
<dbReference type="PRINTS" id="PR01333">
    <property type="entry name" value="2POREKCHANEL"/>
</dbReference>
<dbReference type="SUPFAM" id="SSF81324">
    <property type="entry name" value="Voltage-gated potassium channels"/>
    <property type="match status" value="2"/>
</dbReference>
<protein>
    <recommendedName>
        <fullName>Potassium channel subfamily K member 18</fullName>
    </recommendedName>
    <alternativeName>
        <fullName>TWIK-related individual potassium channel</fullName>
    </alternativeName>
    <alternativeName>
        <fullName>TWIK-related spinal cord potassium channel</fullName>
    </alternativeName>
</protein>
<accession>Q7Z418</accession>
<accession>Q5SQQ8</accession>
<organism>
    <name type="scientific">Homo sapiens</name>
    <name type="common">Human</name>
    <dbReference type="NCBI Taxonomy" id="9606"/>
    <lineage>
        <taxon>Eukaryota</taxon>
        <taxon>Metazoa</taxon>
        <taxon>Chordata</taxon>
        <taxon>Craniata</taxon>
        <taxon>Vertebrata</taxon>
        <taxon>Euteleostomi</taxon>
        <taxon>Mammalia</taxon>
        <taxon>Eutheria</taxon>
        <taxon>Euarchontoglires</taxon>
        <taxon>Primates</taxon>
        <taxon>Haplorrhini</taxon>
        <taxon>Catarrhini</taxon>
        <taxon>Hominidae</taxon>
        <taxon>Homo</taxon>
    </lineage>
</organism>